<name>COBT_DEIRA</name>
<comment type="function">
    <text evidence="1">Catalyzes the synthesis of alpha-ribazole-5'-phosphate from nicotinate mononucleotide (NAMN) and 5,6-dimethylbenzimidazole (DMB).</text>
</comment>
<comment type="catalytic activity">
    <reaction>
        <text>5,6-dimethylbenzimidazole + nicotinate beta-D-ribonucleotide = alpha-ribazole 5'-phosphate + nicotinate + H(+)</text>
        <dbReference type="Rhea" id="RHEA:11196"/>
        <dbReference type="ChEBI" id="CHEBI:15378"/>
        <dbReference type="ChEBI" id="CHEBI:15890"/>
        <dbReference type="ChEBI" id="CHEBI:32544"/>
        <dbReference type="ChEBI" id="CHEBI:57502"/>
        <dbReference type="ChEBI" id="CHEBI:57918"/>
        <dbReference type="EC" id="2.4.2.21"/>
    </reaction>
</comment>
<comment type="pathway">
    <text>Nucleoside biosynthesis; alpha-ribazole biosynthesis; alpha-ribazole from 5,6-dimethylbenzimidazole: step 1/2.</text>
</comment>
<comment type="similarity">
    <text evidence="2">Belongs to the CobT family.</text>
</comment>
<reference key="1">
    <citation type="journal article" date="1999" name="Science">
        <title>Genome sequence of the radioresistant bacterium Deinococcus radiodurans R1.</title>
        <authorList>
            <person name="White O."/>
            <person name="Eisen J.A."/>
            <person name="Heidelberg J.F."/>
            <person name="Hickey E.K."/>
            <person name="Peterson J.D."/>
            <person name="Dodson R.J."/>
            <person name="Haft D.H."/>
            <person name="Gwinn M.L."/>
            <person name="Nelson W.C."/>
            <person name="Richardson D.L."/>
            <person name="Moffat K.S."/>
            <person name="Qin H."/>
            <person name="Jiang L."/>
            <person name="Pamphile W."/>
            <person name="Crosby M."/>
            <person name="Shen M."/>
            <person name="Vamathevan J.J."/>
            <person name="Lam P."/>
            <person name="McDonald L.A."/>
            <person name="Utterback T.R."/>
            <person name="Zalewski C."/>
            <person name="Makarova K.S."/>
            <person name="Aravind L."/>
            <person name="Daly M.J."/>
            <person name="Minton K.W."/>
            <person name="Fleischmann R.D."/>
            <person name="Ketchum K.A."/>
            <person name="Nelson K.E."/>
            <person name="Salzberg S.L."/>
            <person name="Smith H.O."/>
            <person name="Venter J.C."/>
            <person name="Fraser C.M."/>
        </authorList>
    </citation>
    <scope>NUCLEOTIDE SEQUENCE [LARGE SCALE GENOMIC DNA]</scope>
    <source>
        <strain>ATCC 13939 / DSM 20539 / JCM 16871 / CCUG 27074 / LMG 4051 / NBRC 15346 / NCIMB 9279 / VKM B-1422 / R1</strain>
    </source>
</reference>
<organism>
    <name type="scientific">Deinococcus radiodurans (strain ATCC 13939 / DSM 20539 / JCM 16871 / CCUG 27074 / LMG 4051 / NBRC 15346 / NCIMB 9279 / VKM B-1422 / R1)</name>
    <dbReference type="NCBI Taxonomy" id="243230"/>
    <lineage>
        <taxon>Bacteria</taxon>
        <taxon>Thermotogati</taxon>
        <taxon>Deinococcota</taxon>
        <taxon>Deinococci</taxon>
        <taxon>Deinococcales</taxon>
        <taxon>Deinococcaceae</taxon>
        <taxon>Deinococcus</taxon>
    </lineage>
</organism>
<dbReference type="EC" id="2.4.2.21"/>
<dbReference type="EMBL" id="AE001825">
    <property type="protein sequence ID" value="AAF12397.1"/>
    <property type="molecule type" value="Genomic_DNA"/>
</dbReference>
<dbReference type="PIR" id="A75577">
    <property type="entry name" value="A75577"/>
</dbReference>
<dbReference type="RefSeq" id="NP_285563.1">
    <property type="nucleotide sequence ID" value="NC_001264.1"/>
</dbReference>
<dbReference type="RefSeq" id="WP_010889499.1">
    <property type="nucleotide sequence ID" value="NC_001264.1"/>
</dbReference>
<dbReference type="SMR" id="Q9RYR8"/>
<dbReference type="STRING" id="243230.DR_A0240"/>
<dbReference type="PaxDb" id="243230-DR_A0240"/>
<dbReference type="EnsemblBacteria" id="AAF12397">
    <property type="protein sequence ID" value="AAF12397"/>
    <property type="gene ID" value="DR_A0240"/>
</dbReference>
<dbReference type="GeneID" id="69519134"/>
<dbReference type="KEGG" id="dra:DR_A0240"/>
<dbReference type="PATRIC" id="fig|243230.17.peg.3130"/>
<dbReference type="eggNOG" id="COG2038">
    <property type="taxonomic scope" value="Bacteria"/>
</dbReference>
<dbReference type="HOGENOM" id="CLU_002982_0_0_0"/>
<dbReference type="InParanoid" id="Q9RYR8"/>
<dbReference type="OrthoDB" id="9781491at2"/>
<dbReference type="UniPathway" id="UPA00061">
    <property type="reaction ID" value="UER00516"/>
</dbReference>
<dbReference type="Proteomes" id="UP000002524">
    <property type="component" value="Chromosome 2"/>
</dbReference>
<dbReference type="GO" id="GO:0008939">
    <property type="term" value="F:nicotinate-nucleotide-dimethylbenzimidazole phosphoribosyltransferase activity"/>
    <property type="evidence" value="ECO:0007669"/>
    <property type="project" value="UniProtKB-UniRule"/>
</dbReference>
<dbReference type="GO" id="GO:0009236">
    <property type="term" value="P:cobalamin biosynthetic process"/>
    <property type="evidence" value="ECO:0007669"/>
    <property type="project" value="UniProtKB-KW"/>
</dbReference>
<dbReference type="CDD" id="cd02439">
    <property type="entry name" value="DMB-PRT_CobT"/>
    <property type="match status" value="1"/>
</dbReference>
<dbReference type="FunFam" id="3.40.50.10210:FF:000001">
    <property type="entry name" value="Nicotinate-nucleotide--dimethylbenzimidazole phosphoribosyltransferase"/>
    <property type="match status" value="1"/>
</dbReference>
<dbReference type="Gene3D" id="1.10.1610.10">
    <property type="match status" value="1"/>
</dbReference>
<dbReference type="Gene3D" id="3.40.50.10210">
    <property type="match status" value="1"/>
</dbReference>
<dbReference type="HAMAP" id="MF_00230">
    <property type="entry name" value="CobT"/>
    <property type="match status" value="1"/>
</dbReference>
<dbReference type="InterPro" id="IPR003200">
    <property type="entry name" value="Nict_dMeBzImd_PRibTrfase"/>
</dbReference>
<dbReference type="InterPro" id="IPR017846">
    <property type="entry name" value="Nict_dMeBzImd_PRibTrfase_bact"/>
</dbReference>
<dbReference type="InterPro" id="IPR023195">
    <property type="entry name" value="Nict_dMeBzImd_PRibTrfase_N"/>
</dbReference>
<dbReference type="InterPro" id="IPR036087">
    <property type="entry name" value="Nict_dMeBzImd_PRibTrfase_sf"/>
</dbReference>
<dbReference type="NCBIfam" id="TIGR03160">
    <property type="entry name" value="cobT_DBIPRT"/>
    <property type="match status" value="1"/>
</dbReference>
<dbReference type="NCBIfam" id="NF000996">
    <property type="entry name" value="PRK00105.1"/>
    <property type="match status" value="1"/>
</dbReference>
<dbReference type="PANTHER" id="PTHR43463">
    <property type="entry name" value="NICOTINATE-NUCLEOTIDE--DIMETHYLBENZIMIDAZOLE PHOSPHORIBOSYLTRANSFERASE"/>
    <property type="match status" value="1"/>
</dbReference>
<dbReference type="PANTHER" id="PTHR43463:SF1">
    <property type="entry name" value="NICOTINATE-NUCLEOTIDE--DIMETHYLBENZIMIDAZOLE PHOSPHORIBOSYLTRANSFERASE"/>
    <property type="match status" value="1"/>
</dbReference>
<dbReference type="Pfam" id="PF02277">
    <property type="entry name" value="DBI_PRT"/>
    <property type="match status" value="1"/>
</dbReference>
<dbReference type="SUPFAM" id="SSF52733">
    <property type="entry name" value="Nicotinate mononucleotide:5,6-dimethylbenzimidazole phosphoribosyltransferase (CobT)"/>
    <property type="match status" value="1"/>
</dbReference>
<gene>
    <name type="primary">cobT</name>
    <name type="ordered locus">DR_A0240</name>
</gene>
<keyword id="KW-0169">Cobalamin biosynthesis</keyword>
<keyword id="KW-0328">Glycosyltransferase</keyword>
<keyword id="KW-1185">Reference proteome</keyword>
<keyword id="KW-0808">Transferase</keyword>
<feature type="chain" id="PRO_0000167047" description="Nicotinate-nucleotide--dimethylbenzimidazole phosphoribosyltransferase">
    <location>
        <begin position="1"/>
        <end position="365"/>
    </location>
</feature>
<feature type="active site" description="Proton acceptor" evidence="1">
    <location>
        <position position="330"/>
    </location>
</feature>
<sequence length="365" mass="37266">MAMDTGRDSSALTDLLGRLQPADAEAMARARERQAQLTKPAGALGDLEELSVRLAGVFGTERPEPRGAAVLVAAGDHGVAAEGVSAYPPEVTPAMVANFLADTPAGPGGAAVSALARTLGAEVYVMDAGVNADLPEHPALTRAARRRGTRNLRREAAMTREETVALMLAGAALADRAMDAGADFIIPGEMGIGNTTPAAALTARLLGVDPADVTGRGTGVDDERLAHKVDVVREALARTAVTDPLDVLAEFGGFEIAAMLGMMLAAAARRRAVILDGFVEGSAALVGVALAPALRDFLFPAGECAERGHAAQLADLGLKPMFNLGLRLGEGTGGVLALPLLRGAAATLREMRTFEEAAVPGGGAA</sequence>
<evidence type="ECO:0000250" key="1"/>
<evidence type="ECO:0000305" key="2"/>
<accession>Q9RYR8</accession>
<proteinExistence type="inferred from homology"/>
<protein>
    <recommendedName>
        <fullName>Nicotinate-nucleotide--dimethylbenzimidazole phosphoribosyltransferase</fullName>
        <shortName>NN:DBI PRT</shortName>
        <ecNumber>2.4.2.21</ecNumber>
    </recommendedName>
    <alternativeName>
        <fullName>N(1)-alpha-phosphoribosyltransferase</fullName>
    </alternativeName>
</protein>